<sequence>MNLNSIPAFDDNYIWVLNDEAGRCLIVDPGDAEPVLNAIAANNWQPEAIFLTHHHHDHVGGVKELVKKFPQIVVYGPQETQDKGTTQVVKDGETAFVLGHEFSVIATPGHTLGHICYFSKPYLFCGDTLFSGGCGRLFEGTASQMYQSLKKLSALPDDTLVCCAHEYTLSNMKFALSILPHDLSINDYYRKVKELRAKNQITLPVILKNERQINVFLRTEDIDLINVINEETLLQQPEERFAWLRSKKDRF</sequence>
<feature type="chain" id="PRO_1000144765" description="Hydroxyacylglutathione hydrolase">
    <location>
        <begin position="1"/>
        <end position="251"/>
    </location>
</feature>
<feature type="binding site" evidence="1">
    <location>
        <position position="53"/>
    </location>
    <ligand>
        <name>Zn(2+)</name>
        <dbReference type="ChEBI" id="CHEBI:29105"/>
        <label>1</label>
    </ligand>
</feature>
<feature type="binding site" evidence="1">
    <location>
        <position position="55"/>
    </location>
    <ligand>
        <name>Zn(2+)</name>
        <dbReference type="ChEBI" id="CHEBI:29105"/>
        <label>1</label>
    </ligand>
</feature>
<feature type="binding site" evidence="1">
    <location>
        <position position="57"/>
    </location>
    <ligand>
        <name>Zn(2+)</name>
        <dbReference type="ChEBI" id="CHEBI:29105"/>
        <label>2</label>
    </ligand>
</feature>
<feature type="binding site" evidence="1">
    <location>
        <position position="58"/>
    </location>
    <ligand>
        <name>Zn(2+)</name>
        <dbReference type="ChEBI" id="CHEBI:29105"/>
        <label>2</label>
    </ligand>
</feature>
<feature type="binding site" evidence="1">
    <location>
        <position position="110"/>
    </location>
    <ligand>
        <name>Zn(2+)</name>
        <dbReference type="ChEBI" id="CHEBI:29105"/>
        <label>1</label>
    </ligand>
</feature>
<feature type="binding site" evidence="1">
    <location>
        <position position="127"/>
    </location>
    <ligand>
        <name>Zn(2+)</name>
        <dbReference type="ChEBI" id="CHEBI:29105"/>
        <label>1</label>
    </ligand>
</feature>
<feature type="binding site" evidence="1">
    <location>
        <position position="127"/>
    </location>
    <ligand>
        <name>Zn(2+)</name>
        <dbReference type="ChEBI" id="CHEBI:29105"/>
        <label>2</label>
    </ligand>
</feature>
<feature type="binding site" evidence="1">
    <location>
        <position position="165"/>
    </location>
    <ligand>
        <name>Zn(2+)</name>
        <dbReference type="ChEBI" id="CHEBI:29105"/>
        <label>2</label>
    </ligand>
</feature>
<name>GLO2_ECOSM</name>
<keyword id="KW-0378">Hydrolase</keyword>
<keyword id="KW-0479">Metal-binding</keyword>
<keyword id="KW-0862">Zinc</keyword>
<accession>B1LHM1</accession>
<organism>
    <name type="scientific">Escherichia coli (strain SMS-3-5 / SECEC)</name>
    <dbReference type="NCBI Taxonomy" id="439855"/>
    <lineage>
        <taxon>Bacteria</taxon>
        <taxon>Pseudomonadati</taxon>
        <taxon>Pseudomonadota</taxon>
        <taxon>Gammaproteobacteria</taxon>
        <taxon>Enterobacterales</taxon>
        <taxon>Enterobacteriaceae</taxon>
        <taxon>Escherichia</taxon>
    </lineage>
</organism>
<reference key="1">
    <citation type="journal article" date="2008" name="J. Bacteriol.">
        <title>Insights into the environmental resistance gene pool from the genome sequence of the multidrug-resistant environmental isolate Escherichia coli SMS-3-5.</title>
        <authorList>
            <person name="Fricke W.F."/>
            <person name="Wright M.S."/>
            <person name="Lindell A.H."/>
            <person name="Harkins D.M."/>
            <person name="Baker-Austin C."/>
            <person name="Ravel J."/>
            <person name="Stepanauskas R."/>
        </authorList>
    </citation>
    <scope>NUCLEOTIDE SEQUENCE [LARGE SCALE GENOMIC DNA]</scope>
    <source>
        <strain>SMS-3-5 / SECEC</strain>
    </source>
</reference>
<comment type="function">
    <text evidence="1">Thiolesterase that catalyzes the hydrolysis of S-D-lactoyl-glutathione to form glutathione and D-lactic acid.</text>
</comment>
<comment type="catalytic activity">
    <reaction evidence="1">
        <text>an S-(2-hydroxyacyl)glutathione + H2O = a 2-hydroxy carboxylate + glutathione + H(+)</text>
        <dbReference type="Rhea" id="RHEA:21864"/>
        <dbReference type="ChEBI" id="CHEBI:15377"/>
        <dbReference type="ChEBI" id="CHEBI:15378"/>
        <dbReference type="ChEBI" id="CHEBI:57925"/>
        <dbReference type="ChEBI" id="CHEBI:58896"/>
        <dbReference type="ChEBI" id="CHEBI:71261"/>
        <dbReference type="EC" id="3.1.2.6"/>
    </reaction>
</comment>
<comment type="cofactor">
    <cofactor evidence="1">
        <name>Zn(2+)</name>
        <dbReference type="ChEBI" id="CHEBI:29105"/>
    </cofactor>
    <text evidence="1">Binds 2 Zn(2+) ions per subunit.</text>
</comment>
<comment type="pathway">
    <text evidence="1">Secondary metabolite metabolism; methylglyoxal degradation; (R)-lactate from methylglyoxal: step 2/2.</text>
</comment>
<comment type="subunit">
    <text evidence="1">Monomer.</text>
</comment>
<comment type="similarity">
    <text evidence="1">Belongs to the metallo-beta-lactamase superfamily. Glyoxalase II family.</text>
</comment>
<gene>
    <name evidence="1" type="primary">gloB</name>
    <name type="ordered locus">EcSMS35_0226</name>
</gene>
<proteinExistence type="inferred from homology"/>
<dbReference type="EC" id="3.1.2.6" evidence="1"/>
<dbReference type="EMBL" id="CP000970">
    <property type="protein sequence ID" value="ACB17754.1"/>
    <property type="molecule type" value="Genomic_DNA"/>
</dbReference>
<dbReference type="RefSeq" id="WP_001052730.1">
    <property type="nucleotide sequence ID" value="NC_010498.1"/>
</dbReference>
<dbReference type="SMR" id="B1LHM1"/>
<dbReference type="KEGG" id="ecm:EcSMS35_0226"/>
<dbReference type="HOGENOM" id="CLU_030571_4_1_6"/>
<dbReference type="UniPathway" id="UPA00619">
    <property type="reaction ID" value="UER00676"/>
</dbReference>
<dbReference type="Proteomes" id="UP000007011">
    <property type="component" value="Chromosome"/>
</dbReference>
<dbReference type="GO" id="GO:0004416">
    <property type="term" value="F:hydroxyacylglutathione hydrolase activity"/>
    <property type="evidence" value="ECO:0007669"/>
    <property type="project" value="UniProtKB-UniRule"/>
</dbReference>
<dbReference type="GO" id="GO:0046872">
    <property type="term" value="F:metal ion binding"/>
    <property type="evidence" value="ECO:0007669"/>
    <property type="project" value="UniProtKB-KW"/>
</dbReference>
<dbReference type="GO" id="GO:0019243">
    <property type="term" value="P:methylglyoxal catabolic process to D-lactate via S-lactoyl-glutathione"/>
    <property type="evidence" value="ECO:0007669"/>
    <property type="project" value="InterPro"/>
</dbReference>
<dbReference type="CDD" id="cd07723">
    <property type="entry name" value="hydroxyacylglutathione_hydrolase_MBL-fold"/>
    <property type="match status" value="1"/>
</dbReference>
<dbReference type="FunFam" id="3.60.15.10:FF:000012">
    <property type="entry name" value="Hydroxyacylglutathione hydrolase"/>
    <property type="match status" value="1"/>
</dbReference>
<dbReference type="Gene3D" id="3.60.15.10">
    <property type="entry name" value="Ribonuclease Z/Hydroxyacylglutathione hydrolase-like"/>
    <property type="match status" value="1"/>
</dbReference>
<dbReference type="HAMAP" id="MF_01374">
    <property type="entry name" value="Glyoxalase_2"/>
    <property type="match status" value="1"/>
</dbReference>
<dbReference type="InterPro" id="IPR035680">
    <property type="entry name" value="Clx_II_MBL"/>
</dbReference>
<dbReference type="InterPro" id="IPR050110">
    <property type="entry name" value="Glyoxalase_II_hydrolase"/>
</dbReference>
<dbReference type="InterPro" id="IPR032282">
    <property type="entry name" value="HAGH_C"/>
</dbReference>
<dbReference type="InterPro" id="IPR017782">
    <property type="entry name" value="Hydroxyacylglutathione_Hdrlase"/>
</dbReference>
<dbReference type="InterPro" id="IPR001279">
    <property type="entry name" value="Metallo-B-lactamas"/>
</dbReference>
<dbReference type="InterPro" id="IPR036866">
    <property type="entry name" value="RibonucZ/Hydroxyglut_hydro"/>
</dbReference>
<dbReference type="NCBIfam" id="TIGR03413">
    <property type="entry name" value="GSH_gloB"/>
    <property type="match status" value="1"/>
</dbReference>
<dbReference type="NCBIfam" id="NF007597">
    <property type="entry name" value="PRK10241.1"/>
    <property type="match status" value="1"/>
</dbReference>
<dbReference type="PANTHER" id="PTHR43705">
    <property type="entry name" value="HYDROXYACYLGLUTATHIONE HYDROLASE"/>
    <property type="match status" value="1"/>
</dbReference>
<dbReference type="PANTHER" id="PTHR43705:SF1">
    <property type="entry name" value="HYDROXYACYLGLUTATHIONE HYDROLASE GLOB"/>
    <property type="match status" value="1"/>
</dbReference>
<dbReference type="Pfam" id="PF16123">
    <property type="entry name" value="HAGH_C"/>
    <property type="match status" value="1"/>
</dbReference>
<dbReference type="Pfam" id="PF00753">
    <property type="entry name" value="Lactamase_B"/>
    <property type="match status" value="1"/>
</dbReference>
<dbReference type="PIRSF" id="PIRSF005457">
    <property type="entry name" value="Glx"/>
    <property type="match status" value="1"/>
</dbReference>
<dbReference type="SMART" id="SM00849">
    <property type="entry name" value="Lactamase_B"/>
    <property type="match status" value="1"/>
</dbReference>
<dbReference type="SUPFAM" id="SSF56281">
    <property type="entry name" value="Metallo-hydrolase/oxidoreductase"/>
    <property type="match status" value="1"/>
</dbReference>
<evidence type="ECO:0000255" key="1">
    <source>
        <dbReference type="HAMAP-Rule" id="MF_01374"/>
    </source>
</evidence>
<protein>
    <recommendedName>
        <fullName evidence="1">Hydroxyacylglutathione hydrolase</fullName>
        <ecNumber evidence="1">3.1.2.6</ecNumber>
    </recommendedName>
    <alternativeName>
        <fullName evidence="1">Glyoxalase II</fullName>
        <shortName evidence="1">Glx II</shortName>
    </alternativeName>
</protein>